<gene>
    <name evidence="1" type="primary">rplM</name>
    <name type="ordered locus">IL0414</name>
</gene>
<organism>
    <name type="scientific">Idiomarina loihiensis (strain ATCC BAA-735 / DSM 15497 / L2-TR)</name>
    <dbReference type="NCBI Taxonomy" id="283942"/>
    <lineage>
        <taxon>Bacteria</taxon>
        <taxon>Pseudomonadati</taxon>
        <taxon>Pseudomonadota</taxon>
        <taxon>Gammaproteobacteria</taxon>
        <taxon>Alteromonadales</taxon>
        <taxon>Idiomarinaceae</taxon>
        <taxon>Idiomarina</taxon>
    </lineage>
</organism>
<sequence length="142" mass="15918">MKTFVAKPETVKRDWYVVDAEGKTLGRLATEIARRLRGKHKPEYTPHVDTGDYIVVINAEKVAVTGNKAQGKMYYSHTGFPGGIKSISFEKLIAKKPEMVIQKAVKGMLPRGPLGRAMFRKLKVYAGTEHNHIAQQPKQLDI</sequence>
<reference key="1">
    <citation type="journal article" date="2004" name="Proc. Natl. Acad. Sci. U.S.A.">
        <title>Genome sequence of the deep-sea gamma-proteobacterium Idiomarina loihiensis reveals amino acid fermentation as a source of carbon and energy.</title>
        <authorList>
            <person name="Hou S."/>
            <person name="Saw J.H."/>
            <person name="Lee K.S."/>
            <person name="Freitas T.A."/>
            <person name="Belisle C."/>
            <person name="Kawarabayasi Y."/>
            <person name="Donachie S.P."/>
            <person name="Pikina A."/>
            <person name="Galperin M.Y."/>
            <person name="Koonin E.V."/>
            <person name="Makarova K.S."/>
            <person name="Omelchenko M.V."/>
            <person name="Sorokin A."/>
            <person name="Wolf Y.I."/>
            <person name="Li Q.X."/>
            <person name="Keum Y.S."/>
            <person name="Campbell S."/>
            <person name="Denery J."/>
            <person name="Aizawa S."/>
            <person name="Shibata S."/>
            <person name="Malahoff A."/>
            <person name="Alam M."/>
        </authorList>
    </citation>
    <scope>NUCLEOTIDE SEQUENCE [LARGE SCALE GENOMIC DNA]</scope>
    <source>
        <strain>ATCC BAA-735 / DSM 15497 / L2-TR</strain>
    </source>
</reference>
<protein>
    <recommendedName>
        <fullName evidence="1">Large ribosomal subunit protein uL13</fullName>
    </recommendedName>
    <alternativeName>
        <fullName evidence="2">50S ribosomal protein L13</fullName>
    </alternativeName>
</protein>
<evidence type="ECO:0000255" key="1">
    <source>
        <dbReference type="HAMAP-Rule" id="MF_01366"/>
    </source>
</evidence>
<evidence type="ECO:0000305" key="2"/>
<dbReference type="EMBL" id="AE017340">
    <property type="protein sequence ID" value="AAV81257.1"/>
    <property type="molecule type" value="Genomic_DNA"/>
</dbReference>
<dbReference type="RefSeq" id="WP_011233675.1">
    <property type="nucleotide sequence ID" value="NC_006512.1"/>
</dbReference>
<dbReference type="SMR" id="Q5R0K6"/>
<dbReference type="STRING" id="283942.IL0414"/>
<dbReference type="GeneID" id="41335566"/>
<dbReference type="KEGG" id="ilo:IL0414"/>
<dbReference type="eggNOG" id="COG0102">
    <property type="taxonomic scope" value="Bacteria"/>
</dbReference>
<dbReference type="HOGENOM" id="CLU_082184_2_2_6"/>
<dbReference type="OrthoDB" id="9801330at2"/>
<dbReference type="Proteomes" id="UP000001171">
    <property type="component" value="Chromosome"/>
</dbReference>
<dbReference type="GO" id="GO:0022625">
    <property type="term" value="C:cytosolic large ribosomal subunit"/>
    <property type="evidence" value="ECO:0007669"/>
    <property type="project" value="TreeGrafter"/>
</dbReference>
<dbReference type="GO" id="GO:0003729">
    <property type="term" value="F:mRNA binding"/>
    <property type="evidence" value="ECO:0007669"/>
    <property type="project" value="TreeGrafter"/>
</dbReference>
<dbReference type="GO" id="GO:0003735">
    <property type="term" value="F:structural constituent of ribosome"/>
    <property type="evidence" value="ECO:0007669"/>
    <property type="project" value="InterPro"/>
</dbReference>
<dbReference type="GO" id="GO:0017148">
    <property type="term" value="P:negative regulation of translation"/>
    <property type="evidence" value="ECO:0007669"/>
    <property type="project" value="TreeGrafter"/>
</dbReference>
<dbReference type="GO" id="GO:0006412">
    <property type="term" value="P:translation"/>
    <property type="evidence" value="ECO:0007669"/>
    <property type="project" value="UniProtKB-UniRule"/>
</dbReference>
<dbReference type="CDD" id="cd00392">
    <property type="entry name" value="Ribosomal_L13"/>
    <property type="match status" value="1"/>
</dbReference>
<dbReference type="FunFam" id="3.90.1180.10:FF:000001">
    <property type="entry name" value="50S ribosomal protein L13"/>
    <property type="match status" value="1"/>
</dbReference>
<dbReference type="Gene3D" id="3.90.1180.10">
    <property type="entry name" value="Ribosomal protein L13"/>
    <property type="match status" value="1"/>
</dbReference>
<dbReference type="HAMAP" id="MF_01366">
    <property type="entry name" value="Ribosomal_uL13"/>
    <property type="match status" value="1"/>
</dbReference>
<dbReference type="InterPro" id="IPR005822">
    <property type="entry name" value="Ribosomal_uL13"/>
</dbReference>
<dbReference type="InterPro" id="IPR005823">
    <property type="entry name" value="Ribosomal_uL13_bac-type"/>
</dbReference>
<dbReference type="InterPro" id="IPR023563">
    <property type="entry name" value="Ribosomal_uL13_CS"/>
</dbReference>
<dbReference type="InterPro" id="IPR036899">
    <property type="entry name" value="Ribosomal_uL13_sf"/>
</dbReference>
<dbReference type="NCBIfam" id="TIGR01066">
    <property type="entry name" value="rplM_bact"/>
    <property type="match status" value="1"/>
</dbReference>
<dbReference type="PANTHER" id="PTHR11545:SF2">
    <property type="entry name" value="LARGE RIBOSOMAL SUBUNIT PROTEIN UL13M"/>
    <property type="match status" value="1"/>
</dbReference>
<dbReference type="PANTHER" id="PTHR11545">
    <property type="entry name" value="RIBOSOMAL PROTEIN L13"/>
    <property type="match status" value="1"/>
</dbReference>
<dbReference type="Pfam" id="PF00572">
    <property type="entry name" value="Ribosomal_L13"/>
    <property type="match status" value="1"/>
</dbReference>
<dbReference type="PIRSF" id="PIRSF002181">
    <property type="entry name" value="Ribosomal_L13"/>
    <property type="match status" value="1"/>
</dbReference>
<dbReference type="SUPFAM" id="SSF52161">
    <property type="entry name" value="Ribosomal protein L13"/>
    <property type="match status" value="1"/>
</dbReference>
<dbReference type="PROSITE" id="PS00783">
    <property type="entry name" value="RIBOSOMAL_L13"/>
    <property type="match status" value="1"/>
</dbReference>
<accession>Q5R0K6</accession>
<keyword id="KW-1185">Reference proteome</keyword>
<keyword id="KW-0687">Ribonucleoprotein</keyword>
<keyword id="KW-0689">Ribosomal protein</keyword>
<name>RL13_IDILO</name>
<proteinExistence type="inferred from homology"/>
<feature type="chain" id="PRO_0000261735" description="Large ribosomal subunit protein uL13">
    <location>
        <begin position="1"/>
        <end position="142"/>
    </location>
</feature>
<comment type="function">
    <text evidence="1">This protein is one of the early assembly proteins of the 50S ribosomal subunit, although it is not seen to bind rRNA by itself. It is important during the early stages of 50S assembly.</text>
</comment>
<comment type="subunit">
    <text evidence="1">Part of the 50S ribosomal subunit.</text>
</comment>
<comment type="similarity">
    <text evidence="1">Belongs to the universal ribosomal protein uL13 family.</text>
</comment>